<gene>
    <name evidence="1" type="primary">ligA</name>
    <name type="ordered locus">xcc-b100_2690</name>
</gene>
<keyword id="KW-0227">DNA damage</keyword>
<keyword id="KW-0234">DNA repair</keyword>
<keyword id="KW-0235">DNA replication</keyword>
<keyword id="KW-0436">Ligase</keyword>
<keyword id="KW-0460">Magnesium</keyword>
<keyword id="KW-0464">Manganese</keyword>
<keyword id="KW-0479">Metal-binding</keyword>
<keyword id="KW-0520">NAD</keyword>
<keyword id="KW-0862">Zinc</keyword>
<evidence type="ECO:0000255" key="1">
    <source>
        <dbReference type="HAMAP-Rule" id="MF_01588"/>
    </source>
</evidence>
<proteinExistence type="inferred from homology"/>
<dbReference type="EC" id="6.5.1.2" evidence="1"/>
<dbReference type="EMBL" id="AM920689">
    <property type="protein sequence ID" value="CAP52051.1"/>
    <property type="molecule type" value="Genomic_DNA"/>
</dbReference>
<dbReference type="SMR" id="B0RUY2"/>
<dbReference type="KEGG" id="xca:xcc-b100_2690"/>
<dbReference type="HOGENOM" id="CLU_007764_2_1_6"/>
<dbReference type="Proteomes" id="UP000001188">
    <property type="component" value="Chromosome"/>
</dbReference>
<dbReference type="GO" id="GO:0005829">
    <property type="term" value="C:cytosol"/>
    <property type="evidence" value="ECO:0007669"/>
    <property type="project" value="TreeGrafter"/>
</dbReference>
<dbReference type="GO" id="GO:0003911">
    <property type="term" value="F:DNA ligase (NAD+) activity"/>
    <property type="evidence" value="ECO:0007669"/>
    <property type="project" value="UniProtKB-UniRule"/>
</dbReference>
<dbReference type="GO" id="GO:0046872">
    <property type="term" value="F:metal ion binding"/>
    <property type="evidence" value="ECO:0007669"/>
    <property type="project" value="UniProtKB-KW"/>
</dbReference>
<dbReference type="GO" id="GO:0006281">
    <property type="term" value="P:DNA repair"/>
    <property type="evidence" value="ECO:0007669"/>
    <property type="project" value="UniProtKB-KW"/>
</dbReference>
<dbReference type="GO" id="GO:0006260">
    <property type="term" value="P:DNA replication"/>
    <property type="evidence" value="ECO:0007669"/>
    <property type="project" value="UniProtKB-KW"/>
</dbReference>
<dbReference type="CDD" id="cd17748">
    <property type="entry name" value="BRCT_DNA_ligase_like"/>
    <property type="match status" value="1"/>
</dbReference>
<dbReference type="CDD" id="cd00114">
    <property type="entry name" value="LIGANc"/>
    <property type="match status" value="1"/>
</dbReference>
<dbReference type="FunFam" id="1.10.150.20:FF:000006">
    <property type="entry name" value="DNA ligase"/>
    <property type="match status" value="1"/>
</dbReference>
<dbReference type="FunFam" id="1.10.287.610:FF:000002">
    <property type="entry name" value="DNA ligase"/>
    <property type="match status" value="1"/>
</dbReference>
<dbReference type="FunFam" id="2.40.50.140:FF:000012">
    <property type="entry name" value="DNA ligase"/>
    <property type="match status" value="1"/>
</dbReference>
<dbReference type="FunFam" id="3.30.470.30:FF:000001">
    <property type="entry name" value="DNA ligase"/>
    <property type="match status" value="1"/>
</dbReference>
<dbReference type="FunFam" id="3.40.50.10190:FF:000054">
    <property type="entry name" value="DNA ligase"/>
    <property type="match status" value="1"/>
</dbReference>
<dbReference type="Gene3D" id="6.20.10.30">
    <property type="match status" value="1"/>
</dbReference>
<dbReference type="Gene3D" id="1.10.150.20">
    <property type="entry name" value="5' to 3' exonuclease, C-terminal subdomain"/>
    <property type="match status" value="2"/>
</dbReference>
<dbReference type="Gene3D" id="3.40.50.10190">
    <property type="entry name" value="BRCT domain"/>
    <property type="match status" value="1"/>
</dbReference>
<dbReference type="Gene3D" id="3.30.470.30">
    <property type="entry name" value="DNA ligase/mRNA capping enzyme"/>
    <property type="match status" value="1"/>
</dbReference>
<dbReference type="Gene3D" id="1.10.287.610">
    <property type="entry name" value="Helix hairpin bin"/>
    <property type="match status" value="1"/>
</dbReference>
<dbReference type="Gene3D" id="2.40.50.140">
    <property type="entry name" value="Nucleic acid-binding proteins"/>
    <property type="match status" value="1"/>
</dbReference>
<dbReference type="HAMAP" id="MF_01588">
    <property type="entry name" value="DNA_ligase_A"/>
    <property type="match status" value="1"/>
</dbReference>
<dbReference type="InterPro" id="IPR001357">
    <property type="entry name" value="BRCT_dom"/>
</dbReference>
<dbReference type="InterPro" id="IPR036420">
    <property type="entry name" value="BRCT_dom_sf"/>
</dbReference>
<dbReference type="InterPro" id="IPR041663">
    <property type="entry name" value="DisA/LigA_HHH"/>
</dbReference>
<dbReference type="InterPro" id="IPR001679">
    <property type="entry name" value="DNA_ligase"/>
</dbReference>
<dbReference type="InterPro" id="IPR018239">
    <property type="entry name" value="DNA_ligase_AS"/>
</dbReference>
<dbReference type="InterPro" id="IPR013839">
    <property type="entry name" value="DNAligase_adenylation"/>
</dbReference>
<dbReference type="InterPro" id="IPR013840">
    <property type="entry name" value="DNAligase_N"/>
</dbReference>
<dbReference type="InterPro" id="IPR012340">
    <property type="entry name" value="NA-bd_OB-fold"/>
</dbReference>
<dbReference type="InterPro" id="IPR004150">
    <property type="entry name" value="NAD_DNA_ligase_OB"/>
</dbReference>
<dbReference type="InterPro" id="IPR010994">
    <property type="entry name" value="RuvA_2-like"/>
</dbReference>
<dbReference type="InterPro" id="IPR004149">
    <property type="entry name" value="Znf_DNAligase_C4"/>
</dbReference>
<dbReference type="NCBIfam" id="TIGR00575">
    <property type="entry name" value="dnlj"/>
    <property type="match status" value="1"/>
</dbReference>
<dbReference type="NCBIfam" id="NF005932">
    <property type="entry name" value="PRK07956.1"/>
    <property type="match status" value="1"/>
</dbReference>
<dbReference type="PANTHER" id="PTHR23389">
    <property type="entry name" value="CHROMOSOME TRANSMISSION FIDELITY FACTOR 18"/>
    <property type="match status" value="1"/>
</dbReference>
<dbReference type="PANTHER" id="PTHR23389:SF9">
    <property type="entry name" value="DNA LIGASE"/>
    <property type="match status" value="1"/>
</dbReference>
<dbReference type="Pfam" id="PF00533">
    <property type="entry name" value="BRCT"/>
    <property type="match status" value="1"/>
</dbReference>
<dbReference type="Pfam" id="PF01653">
    <property type="entry name" value="DNA_ligase_aden"/>
    <property type="match status" value="1"/>
</dbReference>
<dbReference type="Pfam" id="PF03120">
    <property type="entry name" value="DNA_ligase_OB"/>
    <property type="match status" value="1"/>
</dbReference>
<dbReference type="Pfam" id="PF03119">
    <property type="entry name" value="DNA_ligase_ZBD"/>
    <property type="match status" value="1"/>
</dbReference>
<dbReference type="Pfam" id="PF12826">
    <property type="entry name" value="HHH_2"/>
    <property type="match status" value="1"/>
</dbReference>
<dbReference type="Pfam" id="PF22745">
    <property type="entry name" value="Nlig-Ia"/>
    <property type="match status" value="1"/>
</dbReference>
<dbReference type="PIRSF" id="PIRSF001604">
    <property type="entry name" value="LigA"/>
    <property type="match status" value="1"/>
</dbReference>
<dbReference type="SMART" id="SM00292">
    <property type="entry name" value="BRCT"/>
    <property type="match status" value="1"/>
</dbReference>
<dbReference type="SMART" id="SM00532">
    <property type="entry name" value="LIGANc"/>
    <property type="match status" value="1"/>
</dbReference>
<dbReference type="SUPFAM" id="SSF52113">
    <property type="entry name" value="BRCT domain"/>
    <property type="match status" value="1"/>
</dbReference>
<dbReference type="SUPFAM" id="SSF56091">
    <property type="entry name" value="DNA ligase/mRNA capping enzyme, catalytic domain"/>
    <property type="match status" value="1"/>
</dbReference>
<dbReference type="SUPFAM" id="SSF50249">
    <property type="entry name" value="Nucleic acid-binding proteins"/>
    <property type="match status" value="1"/>
</dbReference>
<dbReference type="SUPFAM" id="SSF47781">
    <property type="entry name" value="RuvA domain 2-like"/>
    <property type="match status" value="2"/>
</dbReference>
<dbReference type="PROSITE" id="PS50172">
    <property type="entry name" value="BRCT"/>
    <property type="match status" value="1"/>
</dbReference>
<dbReference type="PROSITE" id="PS01055">
    <property type="entry name" value="DNA_LIGASE_N1"/>
    <property type="match status" value="1"/>
</dbReference>
<name>DNLJ_XANCB</name>
<protein>
    <recommendedName>
        <fullName evidence="1">DNA ligase</fullName>
        <ecNumber evidence="1">6.5.1.2</ecNumber>
    </recommendedName>
    <alternativeName>
        <fullName evidence="1">Polydeoxyribonucleotide synthase [NAD(+)]</fullName>
    </alternativeName>
</protein>
<organism>
    <name type="scientific">Xanthomonas campestris pv. campestris (strain B100)</name>
    <dbReference type="NCBI Taxonomy" id="509169"/>
    <lineage>
        <taxon>Bacteria</taxon>
        <taxon>Pseudomonadati</taxon>
        <taxon>Pseudomonadota</taxon>
        <taxon>Gammaproteobacteria</taxon>
        <taxon>Lysobacterales</taxon>
        <taxon>Lysobacteraceae</taxon>
        <taxon>Xanthomonas</taxon>
    </lineage>
</organism>
<comment type="function">
    <text evidence="1">DNA ligase that catalyzes the formation of phosphodiester linkages between 5'-phosphoryl and 3'-hydroxyl groups in double-stranded DNA using NAD as a coenzyme and as the energy source for the reaction. It is essential for DNA replication and repair of damaged DNA.</text>
</comment>
<comment type="catalytic activity">
    <reaction evidence="1">
        <text>NAD(+) + (deoxyribonucleotide)n-3'-hydroxyl + 5'-phospho-(deoxyribonucleotide)m = (deoxyribonucleotide)n+m + AMP + beta-nicotinamide D-nucleotide.</text>
        <dbReference type="EC" id="6.5.1.2"/>
    </reaction>
</comment>
<comment type="cofactor">
    <cofactor evidence="1">
        <name>Mg(2+)</name>
        <dbReference type="ChEBI" id="CHEBI:18420"/>
    </cofactor>
    <cofactor evidence="1">
        <name>Mn(2+)</name>
        <dbReference type="ChEBI" id="CHEBI:29035"/>
    </cofactor>
</comment>
<comment type="similarity">
    <text evidence="1">Belongs to the NAD-dependent DNA ligase family. LigA subfamily.</text>
</comment>
<reference key="1">
    <citation type="journal article" date="2008" name="J. Biotechnol.">
        <title>The genome of Xanthomonas campestris pv. campestris B100 and its use for the reconstruction of metabolic pathways involved in xanthan biosynthesis.</title>
        <authorList>
            <person name="Vorhoelter F.-J."/>
            <person name="Schneiker S."/>
            <person name="Goesmann A."/>
            <person name="Krause L."/>
            <person name="Bekel T."/>
            <person name="Kaiser O."/>
            <person name="Linke B."/>
            <person name="Patschkowski T."/>
            <person name="Rueckert C."/>
            <person name="Schmid J."/>
            <person name="Sidhu V.K."/>
            <person name="Sieber V."/>
            <person name="Tauch A."/>
            <person name="Watt S.A."/>
            <person name="Weisshaar B."/>
            <person name="Becker A."/>
            <person name="Niehaus K."/>
            <person name="Puehler A."/>
        </authorList>
    </citation>
    <scope>NUCLEOTIDE SEQUENCE [LARGE SCALE GENOMIC DNA]</scope>
    <source>
        <strain>B100</strain>
    </source>
</reference>
<accession>B0RUY2</accession>
<feature type="chain" id="PRO_0000380509" description="DNA ligase">
    <location>
        <begin position="1"/>
        <end position="833"/>
    </location>
</feature>
<feature type="domain" description="BRCT" evidence="1">
    <location>
        <begin position="750"/>
        <end position="833"/>
    </location>
</feature>
<feature type="active site" description="N6-AMP-lysine intermediate" evidence="1">
    <location>
        <position position="117"/>
    </location>
</feature>
<feature type="binding site" evidence="1">
    <location>
        <begin position="35"/>
        <end position="39"/>
    </location>
    <ligand>
        <name>NAD(+)</name>
        <dbReference type="ChEBI" id="CHEBI:57540"/>
    </ligand>
</feature>
<feature type="binding site" evidence="1">
    <location>
        <begin position="84"/>
        <end position="85"/>
    </location>
    <ligand>
        <name>NAD(+)</name>
        <dbReference type="ChEBI" id="CHEBI:57540"/>
    </ligand>
</feature>
<feature type="binding site" evidence="1">
    <location>
        <position position="115"/>
    </location>
    <ligand>
        <name>NAD(+)</name>
        <dbReference type="ChEBI" id="CHEBI:57540"/>
    </ligand>
</feature>
<feature type="binding site" evidence="1">
    <location>
        <position position="138"/>
    </location>
    <ligand>
        <name>NAD(+)</name>
        <dbReference type="ChEBI" id="CHEBI:57540"/>
    </ligand>
</feature>
<feature type="binding site" evidence="1">
    <location>
        <position position="175"/>
    </location>
    <ligand>
        <name>NAD(+)</name>
        <dbReference type="ChEBI" id="CHEBI:57540"/>
    </ligand>
</feature>
<feature type="binding site" evidence="1">
    <location>
        <position position="292"/>
    </location>
    <ligand>
        <name>NAD(+)</name>
        <dbReference type="ChEBI" id="CHEBI:57540"/>
    </ligand>
</feature>
<feature type="binding site" evidence="1">
    <location>
        <position position="316"/>
    </location>
    <ligand>
        <name>NAD(+)</name>
        <dbReference type="ChEBI" id="CHEBI:57540"/>
    </ligand>
</feature>
<feature type="binding site" evidence="1">
    <location>
        <position position="410"/>
    </location>
    <ligand>
        <name>Zn(2+)</name>
        <dbReference type="ChEBI" id="CHEBI:29105"/>
    </ligand>
</feature>
<feature type="binding site" evidence="1">
    <location>
        <position position="413"/>
    </location>
    <ligand>
        <name>Zn(2+)</name>
        <dbReference type="ChEBI" id="CHEBI:29105"/>
    </ligand>
</feature>
<feature type="binding site" evidence="1">
    <location>
        <position position="428"/>
    </location>
    <ligand>
        <name>Zn(2+)</name>
        <dbReference type="ChEBI" id="CHEBI:29105"/>
    </ligand>
</feature>
<feature type="binding site" evidence="1">
    <location>
        <position position="434"/>
    </location>
    <ligand>
        <name>Zn(2+)</name>
        <dbReference type="ChEBI" id="CHEBI:29105"/>
    </ligand>
</feature>
<sequence length="833" mass="90348">MTASPDPAQRIDALRQRIEDANYRYHVLDEPQIADVEYDRLLRELEALEAAHPELATADSPTQRVGYLAASRFAEVRHVLPMLSLGNAFSDEEVAEFVRRISERLERKQPVFCAEPKLDGLAISLRYEQGEFVQGATRGDGATGEDVSANLRTVKAIPLRLRGTGWPEVLEVRGEVYMPRAAFEAYNAQMRLQGGKVLANPRNGAAGSLRQLDARITAQRPLSFFAYGVGEVADGALPPTHSTMLAQLREWGFPVSQLVEVVQGSEGLLTYYRRIGEARDGLPFDIDGVVYKLDDLAGQREMGFVSRAPRWALAHKFPAQEQSTTVEAIEIQIGRTGAATPVARLKPVHVAGVVVTNATLHNADQIARLDVRVGDTVIVRRAGDVIPEVAGVVAEQRPAGTHAWQMPTQCPVCGSEIVREEGQAVWRCSGELTCPAQRKEAFRHFVSRRAMDVDGLGEKFIEVLVDSGVVQGVADLYLLNVDQLLQLRLISTADSPHAFLREAREHLAAGAYAQVEQTMVGIGVDLAGVQPAPQTWQADLLRAGLPAFDWNRKKIATKWAENLIEAIETSRDTTLERFLFALGIEHVGESTAKALSAWFGELDVIRHLPWPLFKRVPDIGGEVARSLGHFFDQAGNQQAIDDLLQRGVRIGDAHPPSPKLRGALSFAVLLEDLDIPKVTPVRAQQLAAATASFDALIASEADPLLQAGVPAPVIASLQQWLARPENAALATAAQRAMDALLAQLPQADAVQAGPLDGQTVVITGTLAALTRDAAKQRLESLGAKVAGSVSKKTAFLVAGEEAGSKLDKAQSLGVEIWDEARLLAFLSEHGQAV</sequence>